<comment type="function">
    <text evidence="1">Fluoride-specific ion channel. Important for reducing fluoride concentration in the cell, thus reducing its toxicity.</text>
</comment>
<comment type="catalytic activity">
    <reaction evidence="1">
        <text>fluoride(in) = fluoride(out)</text>
        <dbReference type="Rhea" id="RHEA:76159"/>
        <dbReference type="ChEBI" id="CHEBI:17051"/>
    </reaction>
    <physiologicalReaction direction="left-to-right" evidence="1">
        <dbReference type="Rhea" id="RHEA:76160"/>
    </physiologicalReaction>
</comment>
<comment type="activity regulation">
    <text evidence="1">Na(+) is not transported, but it plays an essential structural role and its presence is essential for fluoride channel function.</text>
</comment>
<comment type="subcellular location">
    <subcellularLocation>
        <location evidence="1">Cell membrane</location>
        <topology evidence="1">Multi-pass membrane protein</topology>
    </subcellularLocation>
</comment>
<comment type="similarity">
    <text evidence="1">Belongs to the fluoride channel Fluc/FEX (TC 1.A.43) family.</text>
</comment>
<reference key="1">
    <citation type="submission" date="2009-01" db="EMBL/GenBank/DDBJ databases">
        <title>Complete sequence of Chloroflexus sp. Y-400-fl.</title>
        <authorList>
            <consortium name="US DOE Joint Genome Institute"/>
            <person name="Lucas S."/>
            <person name="Copeland A."/>
            <person name="Lapidus A."/>
            <person name="Glavina del Rio T."/>
            <person name="Dalin E."/>
            <person name="Tice H."/>
            <person name="Bruce D."/>
            <person name="Goodwin L."/>
            <person name="Pitluck S."/>
            <person name="Sims D."/>
            <person name="Kiss H."/>
            <person name="Brettin T."/>
            <person name="Detter J.C."/>
            <person name="Han C."/>
            <person name="Larimer F."/>
            <person name="Land M."/>
            <person name="Hauser L."/>
            <person name="Kyrpides N."/>
            <person name="Ovchinnikova G."/>
            <person name="Bryant D.A."/>
            <person name="Richardson P."/>
        </authorList>
    </citation>
    <scope>NUCLEOTIDE SEQUENCE [LARGE SCALE GENOMIC DNA]</scope>
    <source>
        <strain>ATCC 29364 / DSM 637 / Y-400-fl</strain>
    </source>
</reference>
<proteinExistence type="inferred from homology"/>
<accession>B9LK05</accession>
<dbReference type="EMBL" id="CP001364">
    <property type="protein sequence ID" value="ACM54055.1"/>
    <property type="molecule type" value="Genomic_DNA"/>
</dbReference>
<dbReference type="SMR" id="B9LK05"/>
<dbReference type="KEGG" id="chl:Chy400_2665"/>
<dbReference type="HOGENOM" id="CLU_114342_2_3_0"/>
<dbReference type="GO" id="GO:0005886">
    <property type="term" value="C:plasma membrane"/>
    <property type="evidence" value="ECO:0007669"/>
    <property type="project" value="UniProtKB-SubCell"/>
</dbReference>
<dbReference type="GO" id="GO:0062054">
    <property type="term" value="F:fluoride channel activity"/>
    <property type="evidence" value="ECO:0007669"/>
    <property type="project" value="UniProtKB-UniRule"/>
</dbReference>
<dbReference type="GO" id="GO:0046872">
    <property type="term" value="F:metal ion binding"/>
    <property type="evidence" value="ECO:0007669"/>
    <property type="project" value="UniProtKB-KW"/>
</dbReference>
<dbReference type="GO" id="GO:0140114">
    <property type="term" value="P:cellular detoxification of fluoride"/>
    <property type="evidence" value="ECO:0007669"/>
    <property type="project" value="UniProtKB-UniRule"/>
</dbReference>
<dbReference type="HAMAP" id="MF_00454">
    <property type="entry name" value="FluC"/>
    <property type="match status" value="1"/>
</dbReference>
<dbReference type="InterPro" id="IPR003691">
    <property type="entry name" value="FluC"/>
</dbReference>
<dbReference type="NCBIfam" id="TIGR00494">
    <property type="entry name" value="crcB"/>
    <property type="match status" value="1"/>
</dbReference>
<dbReference type="PANTHER" id="PTHR28259">
    <property type="entry name" value="FLUORIDE EXPORT PROTEIN 1-RELATED"/>
    <property type="match status" value="1"/>
</dbReference>
<dbReference type="PANTHER" id="PTHR28259:SF1">
    <property type="entry name" value="FLUORIDE EXPORT PROTEIN 1-RELATED"/>
    <property type="match status" value="1"/>
</dbReference>
<dbReference type="Pfam" id="PF02537">
    <property type="entry name" value="CRCB"/>
    <property type="match status" value="1"/>
</dbReference>
<keyword id="KW-1003">Cell membrane</keyword>
<keyword id="KW-0407">Ion channel</keyword>
<keyword id="KW-0406">Ion transport</keyword>
<keyword id="KW-0472">Membrane</keyword>
<keyword id="KW-0479">Metal-binding</keyword>
<keyword id="KW-0915">Sodium</keyword>
<keyword id="KW-0812">Transmembrane</keyword>
<keyword id="KW-1133">Transmembrane helix</keyword>
<keyword id="KW-0813">Transport</keyword>
<feature type="chain" id="PRO_1000135317" description="Fluoride-specific ion channel FluC">
    <location>
        <begin position="1"/>
        <end position="126"/>
    </location>
</feature>
<feature type="transmembrane region" description="Helical" evidence="1">
    <location>
        <begin position="4"/>
        <end position="24"/>
    </location>
</feature>
<feature type="transmembrane region" description="Helical" evidence="1">
    <location>
        <begin position="35"/>
        <end position="55"/>
    </location>
</feature>
<feature type="transmembrane region" description="Helical" evidence="1">
    <location>
        <begin position="68"/>
        <end position="88"/>
    </location>
</feature>
<feature type="transmembrane region" description="Helical" evidence="1">
    <location>
        <begin position="100"/>
        <end position="120"/>
    </location>
</feature>
<feature type="binding site" evidence="1">
    <location>
        <position position="75"/>
    </location>
    <ligand>
        <name>Na(+)</name>
        <dbReference type="ChEBI" id="CHEBI:29101"/>
        <note>structural</note>
    </ligand>
</feature>
<feature type="binding site" evidence="1">
    <location>
        <position position="78"/>
    </location>
    <ligand>
        <name>Na(+)</name>
        <dbReference type="ChEBI" id="CHEBI:29101"/>
        <note>structural</note>
    </ligand>
</feature>
<name>FLUC_CHLSY</name>
<gene>
    <name evidence="1" type="primary">fluC</name>
    <name evidence="1" type="synonym">crcB</name>
    <name type="ordered locus">Chy400_2665</name>
</gene>
<sequence length="126" mass="13143">MNNILAIALGAAIGANLRYGIGLWAAQRFGTAWPYGTFIINLLGCLGIGLLLTLISTRLTLSEPVRLMLVTGLLGGFTTFSTFGYESFSLLSSGNWLPAIGYMVGSVVGGLIAVIIGVGLGRWFGG</sequence>
<organism>
    <name type="scientific">Chloroflexus aurantiacus (strain ATCC 29364 / DSM 637 / Y-400-fl)</name>
    <dbReference type="NCBI Taxonomy" id="480224"/>
    <lineage>
        <taxon>Bacteria</taxon>
        <taxon>Bacillati</taxon>
        <taxon>Chloroflexota</taxon>
        <taxon>Chloroflexia</taxon>
        <taxon>Chloroflexales</taxon>
        <taxon>Chloroflexineae</taxon>
        <taxon>Chloroflexaceae</taxon>
        <taxon>Chloroflexus</taxon>
    </lineage>
</organism>
<protein>
    <recommendedName>
        <fullName evidence="1">Fluoride-specific ion channel FluC</fullName>
    </recommendedName>
</protein>
<evidence type="ECO:0000255" key="1">
    <source>
        <dbReference type="HAMAP-Rule" id="MF_00454"/>
    </source>
</evidence>